<keyword id="KW-0413">Isomerase</keyword>
<keyword id="KW-0423">Lactose metabolism</keyword>
<feature type="chain" id="PRO_0000208124" description="Galactose-6-phosphate isomerase subunit LacA 1">
    <location>
        <begin position="1"/>
        <end position="141"/>
    </location>
</feature>
<reference key="1">
    <citation type="journal article" date="2002" name="Proc. Natl. Acad. Sci. U.S.A.">
        <title>Genome sequence and comparative microarray analysis of serotype M18 group A Streptococcus strains associated with acute rheumatic fever outbreaks.</title>
        <authorList>
            <person name="Smoot J.C."/>
            <person name="Barbian K.D."/>
            <person name="Van Gompel J.J."/>
            <person name="Smoot L.M."/>
            <person name="Chaussee M.S."/>
            <person name="Sylva G.L."/>
            <person name="Sturdevant D.E."/>
            <person name="Ricklefs S.M."/>
            <person name="Porcella S.F."/>
            <person name="Parkins L.D."/>
            <person name="Beres S.B."/>
            <person name="Campbell D.S."/>
            <person name="Smith T.M."/>
            <person name="Zhang Q."/>
            <person name="Kapur V."/>
            <person name="Daly J.A."/>
            <person name="Veasy L.G."/>
            <person name="Musser J.M."/>
        </authorList>
    </citation>
    <scope>NUCLEOTIDE SEQUENCE [LARGE SCALE GENOMIC DNA]</scope>
    <source>
        <strain>MGAS8232</strain>
    </source>
</reference>
<organism>
    <name type="scientific">Streptococcus pyogenes serotype M18 (strain MGAS8232)</name>
    <dbReference type="NCBI Taxonomy" id="186103"/>
    <lineage>
        <taxon>Bacteria</taxon>
        <taxon>Bacillati</taxon>
        <taxon>Bacillota</taxon>
        <taxon>Bacilli</taxon>
        <taxon>Lactobacillales</taxon>
        <taxon>Streptococcaceae</taxon>
        <taxon>Streptococcus</taxon>
    </lineage>
</organism>
<proteinExistence type="inferred from homology"/>
<comment type="catalytic activity">
    <reaction evidence="1">
        <text>aldehydo-D-galactose 6-phosphate = keto-D-tagatose 6-phosphate</text>
        <dbReference type="Rhea" id="RHEA:13033"/>
        <dbReference type="ChEBI" id="CHEBI:58255"/>
        <dbReference type="ChEBI" id="CHEBI:134283"/>
        <dbReference type="EC" id="5.3.1.26"/>
    </reaction>
</comment>
<comment type="pathway">
    <text evidence="1">Carbohydrate metabolism; D-galactose 6-phosphate degradation; D-tagatose 6-phosphate from D-galactose 6-phosphate: step 1/1.</text>
</comment>
<comment type="subunit">
    <text evidence="1">Heteromultimeric protein consisting of LacA and LacB.</text>
</comment>
<comment type="similarity">
    <text evidence="1">Belongs to the LacAB/RpiB family.</text>
</comment>
<sequence length="141" mass="15146">MAIILGADAHGNALKELIKSFLQEESYDIIDVTDINSDFIDNTLAVAKAVNEAEGRLGIMVDAYGAGPFMVATKLKGMVAAEVSDERSAYMTRGHNNARMITMGAEIVGPELAKNIAKGFVTGPYDGGRHQIRVDMLNKMA</sequence>
<protein>
    <recommendedName>
        <fullName evidence="1">Galactose-6-phosphate isomerase subunit LacA 1</fullName>
        <ecNumber evidence="1">5.3.1.26</ecNumber>
    </recommendedName>
</protein>
<evidence type="ECO:0000255" key="1">
    <source>
        <dbReference type="HAMAP-Rule" id="MF_01555"/>
    </source>
</evidence>
<dbReference type="EC" id="5.3.1.26" evidence="1"/>
<dbReference type="EMBL" id="AE009949">
    <property type="protein sequence ID" value="AAL98248.1"/>
    <property type="molecule type" value="Genomic_DNA"/>
</dbReference>
<dbReference type="SMR" id="Q8NZV6"/>
<dbReference type="KEGG" id="spm:spyM18_1717"/>
<dbReference type="HOGENOM" id="CLU_091396_4_2_9"/>
<dbReference type="UniPathway" id="UPA00702">
    <property type="reaction ID" value="UER00714"/>
</dbReference>
<dbReference type="GO" id="GO:0050044">
    <property type="term" value="F:galactose-6-phosphate isomerase activity"/>
    <property type="evidence" value="ECO:0007669"/>
    <property type="project" value="UniProtKB-UniRule"/>
</dbReference>
<dbReference type="GO" id="GO:0004751">
    <property type="term" value="F:ribose-5-phosphate isomerase activity"/>
    <property type="evidence" value="ECO:0007669"/>
    <property type="project" value="TreeGrafter"/>
</dbReference>
<dbReference type="GO" id="GO:0019316">
    <property type="term" value="P:D-allose catabolic process"/>
    <property type="evidence" value="ECO:0007669"/>
    <property type="project" value="TreeGrafter"/>
</dbReference>
<dbReference type="GO" id="GO:0019388">
    <property type="term" value="P:galactose catabolic process"/>
    <property type="evidence" value="ECO:0007669"/>
    <property type="project" value="UniProtKB-UniPathway"/>
</dbReference>
<dbReference type="GO" id="GO:0019512">
    <property type="term" value="P:lactose catabolic process via tagatose-6-phosphate"/>
    <property type="evidence" value="ECO:0007669"/>
    <property type="project" value="UniProtKB-UniRule"/>
</dbReference>
<dbReference type="GO" id="GO:0009052">
    <property type="term" value="P:pentose-phosphate shunt, non-oxidative branch"/>
    <property type="evidence" value="ECO:0007669"/>
    <property type="project" value="TreeGrafter"/>
</dbReference>
<dbReference type="Gene3D" id="3.40.1400.10">
    <property type="entry name" value="Sugar-phosphate isomerase, RpiB/LacA/LacB"/>
    <property type="match status" value="1"/>
</dbReference>
<dbReference type="HAMAP" id="MF_01555">
    <property type="entry name" value="LacA"/>
    <property type="match status" value="1"/>
</dbReference>
<dbReference type="InterPro" id="IPR004783">
    <property type="entry name" value="LacA"/>
</dbReference>
<dbReference type="InterPro" id="IPR003500">
    <property type="entry name" value="RpiB_LacA_LacB"/>
</dbReference>
<dbReference type="InterPro" id="IPR036569">
    <property type="entry name" value="RpiB_LacA_LacB_sf"/>
</dbReference>
<dbReference type="NCBIfam" id="TIGR01118">
    <property type="entry name" value="lacA"/>
    <property type="match status" value="1"/>
</dbReference>
<dbReference type="NCBIfam" id="NF006380">
    <property type="entry name" value="PRK08621.1"/>
    <property type="match status" value="1"/>
</dbReference>
<dbReference type="NCBIfam" id="NF009257">
    <property type="entry name" value="PRK12613.1"/>
    <property type="match status" value="1"/>
</dbReference>
<dbReference type="NCBIfam" id="TIGR00689">
    <property type="entry name" value="rpiB_lacA_lacB"/>
    <property type="match status" value="1"/>
</dbReference>
<dbReference type="PANTHER" id="PTHR30345:SF5">
    <property type="entry name" value="GALACTOSE-6-PHOSPHATE ISOMERASE SUBUNIT LACA"/>
    <property type="match status" value="1"/>
</dbReference>
<dbReference type="PANTHER" id="PTHR30345">
    <property type="entry name" value="RIBOSE-5-PHOSPHATE ISOMERASE B"/>
    <property type="match status" value="1"/>
</dbReference>
<dbReference type="Pfam" id="PF02502">
    <property type="entry name" value="LacAB_rpiB"/>
    <property type="match status" value="1"/>
</dbReference>
<dbReference type="PIRSF" id="PIRSF005384">
    <property type="entry name" value="RpiB_LacA_B"/>
    <property type="match status" value="1"/>
</dbReference>
<dbReference type="SUPFAM" id="SSF89623">
    <property type="entry name" value="Ribose/Galactose isomerase RpiB/AlsB"/>
    <property type="match status" value="1"/>
</dbReference>
<name>LACA1_STRP8</name>
<accession>Q8NZV6</accession>
<gene>
    <name evidence="1" type="primary">lacA1</name>
    <name type="ordered locus">spyM18_1717</name>
</gene>